<name>DNAA_FRATN</name>
<evidence type="ECO:0000255" key="1">
    <source>
        <dbReference type="HAMAP-Rule" id="MF_00377"/>
    </source>
</evidence>
<gene>
    <name evidence="1" type="primary">dnaA</name>
    <name type="ordered locus">FTN_0001</name>
</gene>
<protein>
    <recommendedName>
        <fullName evidence="1">Chromosomal replication initiator protein DnaA</fullName>
    </recommendedName>
</protein>
<keyword id="KW-0067">ATP-binding</keyword>
<keyword id="KW-0963">Cytoplasm</keyword>
<keyword id="KW-0235">DNA replication</keyword>
<keyword id="KW-0238">DNA-binding</keyword>
<keyword id="KW-0446">Lipid-binding</keyword>
<keyword id="KW-0547">Nucleotide-binding</keyword>
<reference key="1">
    <citation type="journal article" date="2007" name="Genome Biol.">
        <title>Comparison of Francisella tularensis genomes reveals evolutionary events associated with the emergence of human pathogenic strains.</title>
        <authorList>
            <person name="Rohmer L."/>
            <person name="Fong C."/>
            <person name="Abmayr S."/>
            <person name="Wasnick M."/>
            <person name="Larson Freeman T.J."/>
            <person name="Radey M."/>
            <person name="Guina T."/>
            <person name="Svensson K."/>
            <person name="Hayden H.S."/>
            <person name="Jacobs M."/>
            <person name="Gallagher L.A."/>
            <person name="Manoil C."/>
            <person name="Ernst R.K."/>
            <person name="Drees B."/>
            <person name="Buckley D."/>
            <person name="Haugen E."/>
            <person name="Bovee D."/>
            <person name="Zhou Y."/>
            <person name="Chang J."/>
            <person name="Levy R."/>
            <person name="Lim R."/>
            <person name="Gillett W."/>
            <person name="Guenthener D."/>
            <person name="Kang A."/>
            <person name="Shaffer S.A."/>
            <person name="Taylor G."/>
            <person name="Chen J."/>
            <person name="Gallis B."/>
            <person name="D'Argenio D.A."/>
            <person name="Forsman M."/>
            <person name="Olson M.V."/>
            <person name="Goodlett D.R."/>
            <person name="Kaul R."/>
            <person name="Miller S.I."/>
            <person name="Brittnacher M.J."/>
        </authorList>
    </citation>
    <scope>NUCLEOTIDE SEQUENCE [LARGE SCALE GENOMIC DNA]</scope>
    <source>
        <strain>U112</strain>
    </source>
</reference>
<feature type="chain" id="PRO_1000048646" description="Chromosomal replication initiator protein DnaA">
    <location>
        <begin position="1"/>
        <end position="491"/>
    </location>
</feature>
<feature type="region of interest" description="Domain I, interacts with DnaA modulators" evidence="1">
    <location>
        <begin position="1"/>
        <end position="69"/>
    </location>
</feature>
<feature type="region of interest" description="Domain II" evidence="1">
    <location>
        <begin position="69"/>
        <end position="154"/>
    </location>
</feature>
<feature type="region of interest" description="Domain III, AAA+ region" evidence="1">
    <location>
        <begin position="155"/>
        <end position="371"/>
    </location>
</feature>
<feature type="region of interest" description="Domain IV, binds dsDNA" evidence="1">
    <location>
        <begin position="372"/>
        <end position="491"/>
    </location>
</feature>
<feature type="binding site" evidence="1">
    <location>
        <position position="199"/>
    </location>
    <ligand>
        <name>ATP</name>
        <dbReference type="ChEBI" id="CHEBI:30616"/>
    </ligand>
</feature>
<feature type="binding site" evidence="1">
    <location>
        <position position="201"/>
    </location>
    <ligand>
        <name>ATP</name>
        <dbReference type="ChEBI" id="CHEBI:30616"/>
    </ligand>
</feature>
<feature type="binding site" evidence="1">
    <location>
        <position position="202"/>
    </location>
    <ligand>
        <name>ATP</name>
        <dbReference type="ChEBI" id="CHEBI:30616"/>
    </ligand>
</feature>
<feature type="binding site" evidence="1">
    <location>
        <position position="203"/>
    </location>
    <ligand>
        <name>ATP</name>
        <dbReference type="ChEBI" id="CHEBI:30616"/>
    </ligand>
</feature>
<dbReference type="EMBL" id="CP000439">
    <property type="protein sequence ID" value="ABK88912.1"/>
    <property type="molecule type" value="Genomic_DNA"/>
</dbReference>
<dbReference type="RefSeq" id="WP_011733557.1">
    <property type="nucleotide sequence ID" value="NC_008601.1"/>
</dbReference>
<dbReference type="SMR" id="A0Q3U7"/>
<dbReference type="KEGG" id="ftn:FTN_0001"/>
<dbReference type="KEGG" id="ftx:AW25_201"/>
<dbReference type="Proteomes" id="UP000000762">
    <property type="component" value="Chromosome"/>
</dbReference>
<dbReference type="GO" id="GO:0005737">
    <property type="term" value="C:cytoplasm"/>
    <property type="evidence" value="ECO:0007669"/>
    <property type="project" value="UniProtKB-SubCell"/>
</dbReference>
<dbReference type="GO" id="GO:0005886">
    <property type="term" value="C:plasma membrane"/>
    <property type="evidence" value="ECO:0007669"/>
    <property type="project" value="TreeGrafter"/>
</dbReference>
<dbReference type="GO" id="GO:0005524">
    <property type="term" value="F:ATP binding"/>
    <property type="evidence" value="ECO:0007669"/>
    <property type="project" value="UniProtKB-UniRule"/>
</dbReference>
<dbReference type="GO" id="GO:0016887">
    <property type="term" value="F:ATP hydrolysis activity"/>
    <property type="evidence" value="ECO:0007669"/>
    <property type="project" value="InterPro"/>
</dbReference>
<dbReference type="GO" id="GO:0003688">
    <property type="term" value="F:DNA replication origin binding"/>
    <property type="evidence" value="ECO:0007669"/>
    <property type="project" value="UniProtKB-UniRule"/>
</dbReference>
<dbReference type="GO" id="GO:0008289">
    <property type="term" value="F:lipid binding"/>
    <property type="evidence" value="ECO:0007669"/>
    <property type="project" value="UniProtKB-KW"/>
</dbReference>
<dbReference type="GO" id="GO:0006270">
    <property type="term" value="P:DNA replication initiation"/>
    <property type="evidence" value="ECO:0007669"/>
    <property type="project" value="UniProtKB-UniRule"/>
</dbReference>
<dbReference type="GO" id="GO:0006275">
    <property type="term" value="P:regulation of DNA replication"/>
    <property type="evidence" value="ECO:0007669"/>
    <property type="project" value="UniProtKB-UniRule"/>
</dbReference>
<dbReference type="CDD" id="cd00009">
    <property type="entry name" value="AAA"/>
    <property type="match status" value="1"/>
</dbReference>
<dbReference type="CDD" id="cd06571">
    <property type="entry name" value="Bac_DnaA_C"/>
    <property type="match status" value="1"/>
</dbReference>
<dbReference type="FunFam" id="3.40.50.300:FF:000668">
    <property type="entry name" value="Chromosomal replication initiator protein DnaA"/>
    <property type="match status" value="1"/>
</dbReference>
<dbReference type="Gene3D" id="1.10.1750.10">
    <property type="match status" value="1"/>
</dbReference>
<dbReference type="Gene3D" id="1.10.8.60">
    <property type="match status" value="1"/>
</dbReference>
<dbReference type="Gene3D" id="3.30.300.180">
    <property type="match status" value="1"/>
</dbReference>
<dbReference type="Gene3D" id="3.40.50.300">
    <property type="entry name" value="P-loop containing nucleotide triphosphate hydrolases"/>
    <property type="match status" value="1"/>
</dbReference>
<dbReference type="HAMAP" id="MF_00377">
    <property type="entry name" value="DnaA_bact"/>
    <property type="match status" value="1"/>
</dbReference>
<dbReference type="InterPro" id="IPR003593">
    <property type="entry name" value="AAA+_ATPase"/>
</dbReference>
<dbReference type="InterPro" id="IPR001957">
    <property type="entry name" value="Chromosome_initiator_DnaA"/>
</dbReference>
<dbReference type="InterPro" id="IPR020591">
    <property type="entry name" value="Chromosome_initiator_DnaA-like"/>
</dbReference>
<dbReference type="InterPro" id="IPR018312">
    <property type="entry name" value="Chromosome_initiator_DnaA_CS"/>
</dbReference>
<dbReference type="InterPro" id="IPR013159">
    <property type="entry name" value="DnaA_C"/>
</dbReference>
<dbReference type="InterPro" id="IPR013317">
    <property type="entry name" value="DnaA_dom"/>
</dbReference>
<dbReference type="InterPro" id="IPR024633">
    <property type="entry name" value="DnaA_N_dom"/>
</dbReference>
<dbReference type="InterPro" id="IPR038454">
    <property type="entry name" value="DnaA_N_sf"/>
</dbReference>
<dbReference type="InterPro" id="IPR027417">
    <property type="entry name" value="P-loop_NTPase"/>
</dbReference>
<dbReference type="InterPro" id="IPR010921">
    <property type="entry name" value="Trp_repressor/repl_initiator"/>
</dbReference>
<dbReference type="NCBIfam" id="TIGR00362">
    <property type="entry name" value="DnaA"/>
    <property type="match status" value="1"/>
</dbReference>
<dbReference type="PANTHER" id="PTHR30050">
    <property type="entry name" value="CHROMOSOMAL REPLICATION INITIATOR PROTEIN DNAA"/>
    <property type="match status" value="1"/>
</dbReference>
<dbReference type="PANTHER" id="PTHR30050:SF2">
    <property type="entry name" value="CHROMOSOMAL REPLICATION INITIATOR PROTEIN DNAA"/>
    <property type="match status" value="1"/>
</dbReference>
<dbReference type="Pfam" id="PF00308">
    <property type="entry name" value="Bac_DnaA"/>
    <property type="match status" value="1"/>
</dbReference>
<dbReference type="Pfam" id="PF08299">
    <property type="entry name" value="Bac_DnaA_C"/>
    <property type="match status" value="1"/>
</dbReference>
<dbReference type="Pfam" id="PF11638">
    <property type="entry name" value="DnaA_N"/>
    <property type="match status" value="1"/>
</dbReference>
<dbReference type="PRINTS" id="PR00051">
    <property type="entry name" value="DNAA"/>
</dbReference>
<dbReference type="SMART" id="SM00382">
    <property type="entry name" value="AAA"/>
    <property type="match status" value="1"/>
</dbReference>
<dbReference type="SMART" id="SM00760">
    <property type="entry name" value="Bac_DnaA_C"/>
    <property type="match status" value="1"/>
</dbReference>
<dbReference type="SUPFAM" id="SSF52540">
    <property type="entry name" value="P-loop containing nucleoside triphosphate hydrolases"/>
    <property type="match status" value="1"/>
</dbReference>
<dbReference type="SUPFAM" id="SSF48295">
    <property type="entry name" value="TrpR-like"/>
    <property type="match status" value="1"/>
</dbReference>
<dbReference type="PROSITE" id="PS01008">
    <property type="entry name" value="DNAA"/>
    <property type="match status" value="1"/>
</dbReference>
<sequence length="491" mass="55827">MTTWDKCLKKIKKNLSTFEYKTWIKPIHVEQNSNLFTVYCNNEYFKKHIKSKYGNLILSTIQECHGNDLIIEYSNKKFSGKKITEVITAGPQANFFSTTSVEIKDESEDTKVVQEPKISKKSNTKDFSSSQELFGFDEAMLITAKEDEEYSFGLPLKEKYVFDSFVVGDANKIARAAAMQVSINPGKLHNPLFIYGGSGLGKTHLMQAIGNHAREVNPNAKIIYTNSEQFIKDYVNSIRLQDQDEFQRVYRSADILLIDDIQFIAGKEGTAQEFFHTFNALYENGKQIILTSDKYPNEIEGLEERLVSRFGYGLTVSVDMPDLETRIAILLKKAHDLGQKLPNETAAFIAENVRTNVRELEGALNRVLTTSKFNHKDPTIEVAQACLRDVIKIQEKKVKIDNIQKVVADFYRIRVKDLTSNQRSRNIARPRQIAMSLARELTSHSLPEIGNAFGGRDHTTVMHAVKAITKLRQSNTSISDDYELLLDKISR</sequence>
<accession>A0Q3U7</accession>
<comment type="function">
    <text evidence="1">Plays an essential role in the initiation and regulation of chromosomal replication. ATP-DnaA binds to the origin of replication (oriC) to initiate formation of the DNA replication initiation complex once per cell cycle. Binds the DnaA box (a 9 base pair repeat at the origin) and separates the double-stranded (ds)DNA. Forms a right-handed helical filament on oriC DNA; dsDNA binds to the exterior of the filament while single-stranded (ss)DNA is stabiized in the filament's interior. The ATP-DnaA-oriC complex binds and stabilizes one strand of the AT-rich DNA unwinding element (DUE), permitting loading of DNA polymerase. After initiation quickly degrades to an ADP-DnaA complex that is not apt for DNA replication. Binds acidic phospholipids.</text>
</comment>
<comment type="subunit">
    <text evidence="1">Oligomerizes as a right-handed, spiral filament on DNA at oriC.</text>
</comment>
<comment type="subcellular location">
    <subcellularLocation>
        <location evidence="1">Cytoplasm</location>
    </subcellularLocation>
</comment>
<comment type="domain">
    <text evidence="1">Domain I is involved in oligomerization and binding regulators, domain II is flexibile and of varying length in different bacteria, domain III forms the AAA+ region, while domain IV binds dsDNA.</text>
</comment>
<comment type="similarity">
    <text evidence="1">Belongs to the DnaA family.</text>
</comment>
<organism>
    <name type="scientific">Francisella tularensis subsp. novicida (strain U112)</name>
    <dbReference type="NCBI Taxonomy" id="401614"/>
    <lineage>
        <taxon>Bacteria</taxon>
        <taxon>Pseudomonadati</taxon>
        <taxon>Pseudomonadota</taxon>
        <taxon>Gammaproteobacteria</taxon>
        <taxon>Thiotrichales</taxon>
        <taxon>Francisellaceae</taxon>
        <taxon>Francisella</taxon>
    </lineage>
</organism>
<proteinExistence type="inferred from homology"/>